<accession>P0A968</accession>
<accession>P24245</accession>
<dbReference type="EMBL" id="M31045">
    <property type="status" value="NOT_ANNOTATED_CDS"/>
    <property type="molecule type" value="Genomic_DNA"/>
</dbReference>
<dbReference type="EMBL" id="U00096">
    <property type="protein sequence ID" value="AAC73967.1"/>
    <property type="molecule type" value="Genomic_DNA"/>
</dbReference>
<dbReference type="EMBL" id="AP009048">
    <property type="protein sequence ID" value="BAA35599.1"/>
    <property type="molecule type" value="Genomic_DNA"/>
</dbReference>
<dbReference type="PIR" id="H64826">
    <property type="entry name" value="H64826"/>
</dbReference>
<dbReference type="RefSeq" id="NP_415401.1">
    <property type="nucleotide sequence ID" value="NC_000913.3"/>
</dbReference>
<dbReference type="RefSeq" id="WP_000410785.1">
    <property type="nucleotide sequence ID" value="NZ_STEB01000006.1"/>
</dbReference>
<dbReference type="SMR" id="P0A968"/>
<dbReference type="BioGRID" id="4263137">
    <property type="interactions" value="735"/>
</dbReference>
<dbReference type="BioGRID" id="850041">
    <property type="interactions" value="1"/>
</dbReference>
<dbReference type="DIP" id="DIP-47833N"/>
<dbReference type="FunCoup" id="P0A968">
    <property type="interactions" value="203"/>
</dbReference>
<dbReference type="IntAct" id="P0A968">
    <property type="interactions" value="39"/>
</dbReference>
<dbReference type="STRING" id="511145.b0880"/>
<dbReference type="jPOST" id="P0A968"/>
<dbReference type="PaxDb" id="511145-b0880"/>
<dbReference type="EnsemblBacteria" id="AAC73967">
    <property type="protein sequence ID" value="AAC73967"/>
    <property type="gene ID" value="b0880"/>
</dbReference>
<dbReference type="GeneID" id="93776540"/>
<dbReference type="GeneID" id="945669"/>
<dbReference type="KEGG" id="ecj:JW0864"/>
<dbReference type="KEGG" id="eco:b0880"/>
<dbReference type="KEGG" id="ecoc:C3026_05465"/>
<dbReference type="PATRIC" id="fig|1411691.4.peg.1397"/>
<dbReference type="EchoBASE" id="EB1102"/>
<dbReference type="eggNOG" id="COG1278">
    <property type="taxonomic scope" value="Bacteria"/>
</dbReference>
<dbReference type="HOGENOM" id="CLU_117621_0_2_6"/>
<dbReference type="InParanoid" id="P0A968"/>
<dbReference type="OMA" id="HYSTIKM"/>
<dbReference type="OrthoDB" id="9810590at2"/>
<dbReference type="PhylomeDB" id="P0A968"/>
<dbReference type="BioCyc" id="EcoCyc:EG11111-MONOMER"/>
<dbReference type="PRO" id="PR:P0A968"/>
<dbReference type="Proteomes" id="UP000000625">
    <property type="component" value="Chromosome"/>
</dbReference>
<dbReference type="GO" id="GO:0005829">
    <property type="term" value="C:cytosol"/>
    <property type="evidence" value="ECO:0000314"/>
    <property type="project" value="EcoCyc"/>
</dbReference>
<dbReference type="GO" id="GO:0003676">
    <property type="term" value="F:nucleic acid binding"/>
    <property type="evidence" value="ECO:0000318"/>
    <property type="project" value="GO_Central"/>
</dbReference>
<dbReference type="GO" id="GO:0042803">
    <property type="term" value="F:protein homodimerization activity"/>
    <property type="evidence" value="ECO:0000314"/>
    <property type="project" value="EcoCyc"/>
</dbReference>
<dbReference type="GO" id="GO:0003723">
    <property type="term" value="F:RNA binding"/>
    <property type="evidence" value="ECO:0000314"/>
    <property type="project" value="EcoCyc"/>
</dbReference>
<dbReference type="GO" id="GO:0003697">
    <property type="term" value="F:single-stranded DNA binding"/>
    <property type="evidence" value="ECO:0000314"/>
    <property type="project" value="EcoCyc"/>
</dbReference>
<dbReference type="GO" id="GO:0090729">
    <property type="term" value="F:toxin activity"/>
    <property type="evidence" value="ECO:0007669"/>
    <property type="project" value="UniProtKB-KW"/>
</dbReference>
<dbReference type="GO" id="GO:0008156">
    <property type="term" value="P:negative regulation of DNA replication"/>
    <property type="evidence" value="ECO:0000314"/>
    <property type="project" value="EcoCyc"/>
</dbReference>
<dbReference type="GO" id="GO:0006355">
    <property type="term" value="P:regulation of DNA-templated transcription"/>
    <property type="evidence" value="ECO:0007669"/>
    <property type="project" value="InterPro"/>
</dbReference>
<dbReference type="GO" id="GO:0010468">
    <property type="term" value="P:regulation of gene expression"/>
    <property type="evidence" value="ECO:0000318"/>
    <property type="project" value="GO_Central"/>
</dbReference>
<dbReference type="GO" id="GO:0042594">
    <property type="term" value="P:response to starvation"/>
    <property type="evidence" value="ECO:0000314"/>
    <property type="project" value="EcoliWiki"/>
</dbReference>
<dbReference type="CDD" id="cd04458">
    <property type="entry name" value="CSP_CDS"/>
    <property type="match status" value="1"/>
</dbReference>
<dbReference type="DisProt" id="DP02900"/>
<dbReference type="FunFam" id="2.40.50.140:FF:000006">
    <property type="entry name" value="Cold shock protein CspC"/>
    <property type="match status" value="1"/>
</dbReference>
<dbReference type="Gene3D" id="2.40.50.140">
    <property type="entry name" value="Nucleic acid-binding proteins"/>
    <property type="match status" value="1"/>
</dbReference>
<dbReference type="InterPro" id="IPR012156">
    <property type="entry name" value="Cold_shock_CspA"/>
</dbReference>
<dbReference type="InterPro" id="IPR050181">
    <property type="entry name" value="Cold_shock_domain"/>
</dbReference>
<dbReference type="InterPro" id="IPR011129">
    <property type="entry name" value="CSD"/>
</dbReference>
<dbReference type="InterPro" id="IPR019844">
    <property type="entry name" value="CSD_CS"/>
</dbReference>
<dbReference type="InterPro" id="IPR002059">
    <property type="entry name" value="CSP_DNA-bd"/>
</dbReference>
<dbReference type="InterPro" id="IPR012751">
    <property type="entry name" value="CspD"/>
</dbReference>
<dbReference type="InterPro" id="IPR012340">
    <property type="entry name" value="NA-bd_OB-fold"/>
</dbReference>
<dbReference type="NCBIfam" id="TIGR02381">
    <property type="entry name" value="cspD"/>
    <property type="match status" value="1"/>
</dbReference>
<dbReference type="NCBIfam" id="NF007405">
    <property type="entry name" value="PRK09937.1"/>
    <property type="match status" value="1"/>
</dbReference>
<dbReference type="NCBIfam" id="NF011574">
    <property type="entry name" value="PRK14998.1"/>
    <property type="match status" value="1"/>
</dbReference>
<dbReference type="PANTHER" id="PTHR11544">
    <property type="entry name" value="COLD SHOCK DOMAIN CONTAINING PROTEINS"/>
    <property type="match status" value="1"/>
</dbReference>
<dbReference type="Pfam" id="PF00313">
    <property type="entry name" value="CSD"/>
    <property type="match status" value="1"/>
</dbReference>
<dbReference type="PIRSF" id="PIRSF002599">
    <property type="entry name" value="Cold_shock_A"/>
    <property type="match status" value="1"/>
</dbReference>
<dbReference type="PRINTS" id="PR00050">
    <property type="entry name" value="COLDSHOCK"/>
</dbReference>
<dbReference type="SMART" id="SM00357">
    <property type="entry name" value="CSP"/>
    <property type="match status" value="1"/>
</dbReference>
<dbReference type="SUPFAM" id="SSF50249">
    <property type="entry name" value="Nucleic acid-binding proteins"/>
    <property type="match status" value="1"/>
</dbReference>
<dbReference type="PROSITE" id="PS00352">
    <property type="entry name" value="CSD_1"/>
    <property type="match status" value="1"/>
</dbReference>
<dbReference type="PROSITE" id="PS51857">
    <property type="entry name" value="CSD_2"/>
    <property type="match status" value="1"/>
</dbReference>
<feature type="chain" id="PRO_0000100248" description="Cold shock-like protein CspD">
    <location>
        <begin position="1"/>
        <end position="74"/>
    </location>
</feature>
<feature type="domain" description="CSD">
    <location>
        <begin position="4"/>
        <end position="64"/>
    </location>
</feature>
<feature type="sequence conflict" description="In Ref. 5; AA sequence." evidence="3" ref="5">
    <original>C</original>
    <variation>E</variation>
    <location>
        <position position="19"/>
    </location>
</feature>
<keyword id="KW-0963">Cytoplasm</keyword>
<keyword id="KW-0903">Direct protein sequencing</keyword>
<keyword id="KW-0236">DNA replication inhibitor</keyword>
<keyword id="KW-0238">DNA-binding</keyword>
<keyword id="KW-1185">Reference proteome</keyword>
<keyword id="KW-0694">RNA-binding</keyword>
<keyword id="KW-0800">Toxin</keyword>
<reference key="1">
    <citation type="journal article" date="1990" name="J. Biol. Chem.">
        <title>The ATP-dependent Clp protease of Escherichia coli. Sequence of clpA and identification of a Clp-specific substrate.</title>
        <authorList>
            <person name="Gottesman S."/>
            <person name="Clark W.P."/>
            <person name="Maurizi M.R."/>
        </authorList>
    </citation>
    <scope>NUCLEOTIDE SEQUENCE [GENOMIC DNA]</scope>
    <source>
        <strain>K12</strain>
    </source>
</reference>
<reference key="2">
    <citation type="journal article" date="1996" name="DNA Res.">
        <title>A 718-kb DNA sequence of the Escherichia coli K-12 genome corresponding to the 12.7-28.0 min region on the linkage map.</title>
        <authorList>
            <person name="Oshima T."/>
            <person name="Aiba H."/>
            <person name="Baba T."/>
            <person name="Fujita K."/>
            <person name="Hayashi K."/>
            <person name="Honjo A."/>
            <person name="Ikemoto K."/>
            <person name="Inada T."/>
            <person name="Itoh T."/>
            <person name="Kajihara M."/>
            <person name="Kanai K."/>
            <person name="Kashimoto K."/>
            <person name="Kimura S."/>
            <person name="Kitagawa M."/>
            <person name="Makino K."/>
            <person name="Masuda S."/>
            <person name="Miki T."/>
            <person name="Mizobuchi K."/>
            <person name="Mori H."/>
            <person name="Motomura K."/>
            <person name="Nakamura Y."/>
            <person name="Nashimoto H."/>
            <person name="Nishio Y."/>
            <person name="Saito N."/>
            <person name="Sampei G."/>
            <person name="Seki Y."/>
            <person name="Tagami H."/>
            <person name="Takemoto K."/>
            <person name="Wada C."/>
            <person name="Yamamoto Y."/>
            <person name="Yano M."/>
            <person name="Horiuchi T."/>
        </authorList>
    </citation>
    <scope>NUCLEOTIDE SEQUENCE [LARGE SCALE GENOMIC DNA]</scope>
    <source>
        <strain>K12 / W3110 / ATCC 27325 / DSM 5911</strain>
    </source>
</reference>
<reference key="3">
    <citation type="journal article" date="1997" name="Science">
        <title>The complete genome sequence of Escherichia coli K-12.</title>
        <authorList>
            <person name="Blattner F.R."/>
            <person name="Plunkett G. III"/>
            <person name="Bloch C.A."/>
            <person name="Perna N.T."/>
            <person name="Burland V."/>
            <person name="Riley M."/>
            <person name="Collado-Vides J."/>
            <person name="Glasner J.D."/>
            <person name="Rode C.K."/>
            <person name="Mayhew G.F."/>
            <person name="Gregor J."/>
            <person name="Davis N.W."/>
            <person name="Kirkpatrick H.A."/>
            <person name="Goeden M.A."/>
            <person name="Rose D.J."/>
            <person name="Mau B."/>
            <person name="Shao Y."/>
        </authorList>
    </citation>
    <scope>NUCLEOTIDE SEQUENCE [LARGE SCALE GENOMIC DNA]</scope>
    <source>
        <strain>K12 / MG1655 / ATCC 47076</strain>
    </source>
</reference>
<reference key="4">
    <citation type="journal article" date="2006" name="Mol. Syst. Biol.">
        <title>Highly accurate genome sequences of Escherichia coli K-12 strains MG1655 and W3110.</title>
        <authorList>
            <person name="Hayashi K."/>
            <person name="Morooka N."/>
            <person name="Yamamoto Y."/>
            <person name="Fujita K."/>
            <person name="Isono K."/>
            <person name="Choi S."/>
            <person name="Ohtsubo E."/>
            <person name="Baba T."/>
            <person name="Wanner B.L."/>
            <person name="Mori H."/>
            <person name="Horiuchi T."/>
        </authorList>
    </citation>
    <scope>NUCLEOTIDE SEQUENCE [LARGE SCALE GENOMIC DNA]</scope>
    <source>
        <strain>K12 / W3110 / ATCC 27325 / DSM 5911</strain>
    </source>
</reference>
<reference key="5">
    <citation type="journal article" date="1998" name="FEMS Microbiol. Lett.">
        <title>Small genes/gene-products in Escherichia coli K-12.</title>
        <authorList>
            <person name="Wasinger V.C."/>
            <person name="Humphery-Smith I."/>
        </authorList>
    </citation>
    <scope>PROTEIN SEQUENCE OF 1-20</scope>
    <source>
        <strain>K12</strain>
    </source>
</reference>
<reference key="6">
    <citation type="journal article" date="1992" name="New Biol.">
        <title>The product of unr, the highly conserved gene upstream of N-ras, contains multiple repeats similar to the cold-shock domain (CSD), a putative DNA-binding motif.</title>
        <authorList>
            <person name="Doniger J."/>
            <person name="Landsman D."/>
            <person name="Gonda M.A."/>
            <person name="Wistow G."/>
        </authorList>
    </citation>
    <scope>SIMILARITY TO OTHER CSD PROTEINS</scope>
</reference>
<reference key="7">
    <citation type="journal article" date="2001" name="Mol. Microbiol.">
        <title>CspD, a novel DNA replication inhibitor induced during the stationary phase in Escherichia coli.</title>
        <authorList>
            <person name="Yamanaka K."/>
            <person name="Zheng W."/>
            <person name="Crooke E."/>
            <person name="Wang Y.-H."/>
            <person name="Inouye M."/>
        </authorList>
    </citation>
    <scope>CHARACTERIZATION</scope>
    <source>
        <strain>K12 / W3110 / ATCC 27325 / DSM 5911</strain>
    </source>
</reference>
<reference key="8">
    <citation type="journal article" date="2010" name="Biochem. Biophys. Res. Commun.">
        <title>Toxins Hha and CspD and small RNA regulator Hfq are involved in persister cell formation through MqsR in Escherichia coli.</title>
        <authorList>
            <person name="Kim Y."/>
            <person name="Wood T.K."/>
        </authorList>
    </citation>
    <scope>FUNCTION IN PERSISTER CELL FORMATION</scope>
    <scope>DISRUPTION PHENOTYPE</scope>
    <source>
        <strain>K12 / BW25113</strain>
    </source>
</reference>
<reference key="9">
    <citation type="journal article" date="2010" name="Environ. Microbiol.">
        <title>Escherichia coli toxin/antitoxin pair MqsR/MqsA regulate toxin CspD.</title>
        <authorList>
            <person name="Kim Y."/>
            <person name="Wang X."/>
            <person name="Zhang X.S."/>
            <person name="Grigoriu S."/>
            <person name="Page R."/>
            <person name="Peti W."/>
            <person name="Wood T.K."/>
        </authorList>
    </citation>
    <scope>FUNCTION AS A TOXIN</scope>
    <scope>INDUCTION</scope>
    <source>
        <strain>K12 / BW25113</strain>
    </source>
</reference>
<gene>
    <name type="primary">cspD</name>
    <name type="synonym">cspH</name>
    <name type="synonym">ybjA</name>
    <name type="ordered locus">b0880</name>
    <name type="ordered locus">JW0864</name>
</gene>
<evidence type="ECO:0000269" key="1">
    <source>
    </source>
</evidence>
<evidence type="ECO:0000269" key="2">
    <source>
    </source>
</evidence>
<evidence type="ECO:0000305" key="3"/>
<proteinExistence type="evidence at protein level"/>
<sequence length="74" mass="7969">MEKGTVKWFNNAKGFGFICPEGGGEDIFAHYSTIQMDGYRTLKAGQSVQFDVHQGPKGNHASVIVPVEVEAAVA</sequence>
<name>CSPD_ECOLI</name>
<protein>
    <recommendedName>
        <fullName>Cold shock-like protein CspD</fullName>
        <shortName>CSP-D</shortName>
    </recommendedName>
</protein>
<organism>
    <name type="scientific">Escherichia coli (strain K12)</name>
    <dbReference type="NCBI Taxonomy" id="83333"/>
    <lineage>
        <taxon>Bacteria</taxon>
        <taxon>Pseudomonadati</taxon>
        <taxon>Pseudomonadota</taxon>
        <taxon>Gammaproteobacteria</taxon>
        <taxon>Enterobacterales</taxon>
        <taxon>Enterobacteriaceae</taxon>
        <taxon>Escherichia</taxon>
    </lineage>
</organism>
<comment type="function">
    <text>Inhibits DNA replication at both initiation and elongation steps, most probably by binding to the opened, single-stranded regions at replication forks. Plays a regulatory role in chromosomal replication in nutrient-depleted cells.</text>
</comment>
<comment type="function">
    <text>Involved in persister cell formation, acting downstream of mRNA interferase (toxin) MqsR. Overproduction is toxic.</text>
</comment>
<comment type="subunit">
    <text>Homodimer.</text>
</comment>
<comment type="interaction">
    <interactant intactId="EBI-547937">
        <id>P0A968</id>
    </interactant>
    <interactant intactId="EBI-548206">
        <id>P0AAG0</id>
        <label>dppD</label>
    </interactant>
    <organismsDiffer>false</organismsDiffer>
    <experiments>3</experiments>
</comment>
<comment type="subcellular location">
    <subcellularLocation>
        <location>Cytoplasm</location>
    </subcellularLocation>
</comment>
<comment type="induction">
    <text evidence="2">Not induced by cold-shock. Stationary-phase and starvation inducible, as well as by oxidative stress (30 mM H(2)O(2)). Repressed by MqsA and MqsRA toxin-antitoxin system.</text>
</comment>
<comment type="disruption phenotype">
    <text evidence="1">Deletion represses the production of persister cells.</text>
</comment>
<comment type="miscellaneous">
    <text>Binds single-stranded DNA and RNA, but not double-stranded DNA, through hydrophobic interactions without sequence specificity, resulting in a packed structure.</text>
</comment>